<keyword id="KW-0488">Methylation</keyword>
<keyword id="KW-0687">Ribonucleoprotein</keyword>
<keyword id="KW-0689">Ribosomal protein</keyword>
<keyword id="KW-0694">RNA-binding</keyword>
<keyword id="KW-0699">rRNA-binding</keyword>
<dbReference type="EMBL" id="CP000422">
    <property type="protein sequence ID" value="ABJ68524.1"/>
    <property type="molecule type" value="Genomic_DNA"/>
</dbReference>
<dbReference type="RefSeq" id="WP_002833257.1">
    <property type="nucleotide sequence ID" value="NC_008525.1"/>
</dbReference>
<dbReference type="SMR" id="Q03E48"/>
<dbReference type="STRING" id="278197.PEPE_1493"/>
<dbReference type="GeneID" id="33062878"/>
<dbReference type="KEGG" id="ppe:PEPE_1493"/>
<dbReference type="eggNOG" id="COG0080">
    <property type="taxonomic scope" value="Bacteria"/>
</dbReference>
<dbReference type="HOGENOM" id="CLU_074237_2_1_9"/>
<dbReference type="OrthoDB" id="9802408at2"/>
<dbReference type="Proteomes" id="UP000000773">
    <property type="component" value="Chromosome"/>
</dbReference>
<dbReference type="GO" id="GO:0022625">
    <property type="term" value="C:cytosolic large ribosomal subunit"/>
    <property type="evidence" value="ECO:0007669"/>
    <property type="project" value="TreeGrafter"/>
</dbReference>
<dbReference type="GO" id="GO:0070180">
    <property type="term" value="F:large ribosomal subunit rRNA binding"/>
    <property type="evidence" value="ECO:0007669"/>
    <property type="project" value="UniProtKB-UniRule"/>
</dbReference>
<dbReference type="GO" id="GO:0003735">
    <property type="term" value="F:structural constituent of ribosome"/>
    <property type="evidence" value="ECO:0007669"/>
    <property type="project" value="InterPro"/>
</dbReference>
<dbReference type="GO" id="GO:0006412">
    <property type="term" value="P:translation"/>
    <property type="evidence" value="ECO:0007669"/>
    <property type="project" value="UniProtKB-UniRule"/>
</dbReference>
<dbReference type="CDD" id="cd00349">
    <property type="entry name" value="Ribosomal_L11"/>
    <property type="match status" value="1"/>
</dbReference>
<dbReference type="FunFam" id="1.10.10.250:FF:000001">
    <property type="entry name" value="50S ribosomal protein L11"/>
    <property type="match status" value="1"/>
</dbReference>
<dbReference type="FunFam" id="3.30.1550.10:FF:000001">
    <property type="entry name" value="50S ribosomal protein L11"/>
    <property type="match status" value="1"/>
</dbReference>
<dbReference type="Gene3D" id="1.10.10.250">
    <property type="entry name" value="Ribosomal protein L11, C-terminal domain"/>
    <property type="match status" value="1"/>
</dbReference>
<dbReference type="Gene3D" id="3.30.1550.10">
    <property type="entry name" value="Ribosomal protein L11/L12, N-terminal domain"/>
    <property type="match status" value="1"/>
</dbReference>
<dbReference type="HAMAP" id="MF_00736">
    <property type="entry name" value="Ribosomal_uL11"/>
    <property type="match status" value="1"/>
</dbReference>
<dbReference type="InterPro" id="IPR000911">
    <property type="entry name" value="Ribosomal_uL11"/>
</dbReference>
<dbReference type="InterPro" id="IPR006519">
    <property type="entry name" value="Ribosomal_uL11_bac-typ"/>
</dbReference>
<dbReference type="InterPro" id="IPR020783">
    <property type="entry name" value="Ribosomal_uL11_C"/>
</dbReference>
<dbReference type="InterPro" id="IPR036769">
    <property type="entry name" value="Ribosomal_uL11_C_sf"/>
</dbReference>
<dbReference type="InterPro" id="IPR020785">
    <property type="entry name" value="Ribosomal_uL11_CS"/>
</dbReference>
<dbReference type="InterPro" id="IPR020784">
    <property type="entry name" value="Ribosomal_uL11_N"/>
</dbReference>
<dbReference type="InterPro" id="IPR036796">
    <property type="entry name" value="Ribosomal_uL11_N_sf"/>
</dbReference>
<dbReference type="NCBIfam" id="TIGR01632">
    <property type="entry name" value="L11_bact"/>
    <property type="match status" value="1"/>
</dbReference>
<dbReference type="PANTHER" id="PTHR11661">
    <property type="entry name" value="60S RIBOSOMAL PROTEIN L12"/>
    <property type="match status" value="1"/>
</dbReference>
<dbReference type="PANTHER" id="PTHR11661:SF1">
    <property type="entry name" value="LARGE RIBOSOMAL SUBUNIT PROTEIN UL11M"/>
    <property type="match status" value="1"/>
</dbReference>
<dbReference type="Pfam" id="PF00298">
    <property type="entry name" value="Ribosomal_L11"/>
    <property type="match status" value="1"/>
</dbReference>
<dbReference type="Pfam" id="PF03946">
    <property type="entry name" value="Ribosomal_L11_N"/>
    <property type="match status" value="1"/>
</dbReference>
<dbReference type="SMART" id="SM00649">
    <property type="entry name" value="RL11"/>
    <property type="match status" value="1"/>
</dbReference>
<dbReference type="SUPFAM" id="SSF54747">
    <property type="entry name" value="Ribosomal L11/L12e N-terminal domain"/>
    <property type="match status" value="1"/>
</dbReference>
<dbReference type="SUPFAM" id="SSF46906">
    <property type="entry name" value="Ribosomal protein L11, C-terminal domain"/>
    <property type="match status" value="1"/>
</dbReference>
<dbReference type="PROSITE" id="PS00359">
    <property type="entry name" value="RIBOSOMAL_L11"/>
    <property type="match status" value="1"/>
</dbReference>
<name>RL11_PEDPA</name>
<organism>
    <name type="scientific">Pediococcus pentosaceus (strain ATCC 25745 / CCUG 21536 / LMG 10740 / 183-1w)</name>
    <dbReference type="NCBI Taxonomy" id="278197"/>
    <lineage>
        <taxon>Bacteria</taxon>
        <taxon>Bacillati</taxon>
        <taxon>Bacillota</taxon>
        <taxon>Bacilli</taxon>
        <taxon>Lactobacillales</taxon>
        <taxon>Lactobacillaceae</taxon>
        <taxon>Pediococcus</taxon>
    </lineage>
</organism>
<comment type="function">
    <text evidence="1">Forms part of the ribosomal stalk which helps the ribosome interact with GTP-bound translation factors.</text>
</comment>
<comment type="subunit">
    <text evidence="1">Part of the ribosomal stalk of the 50S ribosomal subunit. Interacts with L10 and the large rRNA to form the base of the stalk. L10 forms an elongated spine to which L12 dimers bind in a sequential fashion forming a multimeric L10(L12)X complex.</text>
</comment>
<comment type="PTM">
    <text evidence="1">One or more lysine residues are methylated.</text>
</comment>
<comment type="similarity">
    <text evidence="1">Belongs to the universal ribosomal protein uL11 family.</text>
</comment>
<feature type="chain" id="PRO_1000046234" description="Large ribosomal subunit protein uL11">
    <location>
        <begin position="1"/>
        <end position="141"/>
    </location>
</feature>
<reference key="1">
    <citation type="journal article" date="2006" name="Proc. Natl. Acad. Sci. U.S.A.">
        <title>Comparative genomics of the lactic acid bacteria.</title>
        <authorList>
            <person name="Makarova K.S."/>
            <person name="Slesarev A."/>
            <person name="Wolf Y.I."/>
            <person name="Sorokin A."/>
            <person name="Mirkin B."/>
            <person name="Koonin E.V."/>
            <person name="Pavlov A."/>
            <person name="Pavlova N."/>
            <person name="Karamychev V."/>
            <person name="Polouchine N."/>
            <person name="Shakhova V."/>
            <person name="Grigoriev I."/>
            <person name="Lou Y."/>
            <person name="Rohksar D."/>
            <person name="Lucas S."/>
            <person name="Huang K."/>
            <person name="Goodstein D.M."/>
            <person name="Hawkins T."/>
            <person name="Plengvidhya V."/>
            <person name="Welker D."/>
            <person name="Hughes J."/>
            <person name="Goh Y."/>
            <person name="Benson A."/>
            <person name="Baldwin K."/>
            <person name="Lee J.-H."/>
            <person name="Diaz-Muniz I."/>
            <person name="Dosti B."/>
            <person name="Smeianov V."/>
            <person name="Wechter W."/>
            <person name="Barabote R."/>
            <person name="Lorca G."/>
            <person name="Altermann E."/>
            <person name="Barrangou R."/>
            <person name="Ganesan B."/>
            <person name="Xie Y."/>
            <person name="Rawsthorne H."/>
            <person name="Tamir D."/>
            <person name="Parker C."/>
            <person name="Breidt F."/>
            <person name="Broadbent J.R."/>
            <person name="Hutkins R."/>
            <person name="O'Sullivan D."/>
            <person name="Steele J."/>
            <person name="Unlu G."/>
            <person name="Saier M.H. Jr."/>
            <person name="Klaenhammer T."/>
            <person name="Richardson P."/>
            <person name="Kozyavkin S."/>
            <person name="Weimer B.C."/>
            <person name="Mills D.A."/>
        </authorList>
    </citation>
    <scope>NUCLEOTIDE SEQUENCE [LARGE SCALE GENOMIC DNA]</scope>
    <source>
        <strain>ATCC 25745 / CCUG 21536 / LMG 10740 / 183-1w</strain>
    </source>
</reference>
<sequence>MAKKVANIVKLQIPAGKATPAPPVGPALGQAGINIMGFTKDFNARTADQAGLLIPVVITVYEDRSFDFVTKTPPASVLLKKAAGVEHGSGEPNTNKVATVTSAQVKEIAETKMQDLNAADVEAAMRMIEGTARSMGFVVEG</sequence>
<protein>
    <recommendedName>
        <fullName evidence="1">Large ribosomal subunit protein uL11</fullName>
    </recommendedName>
    <alternativeName>
        <fullName evidence="2">50S ribosomal protein L11</fullName>
    </alternativeName>
</protein>
<gene>
    <name evidence="1" type="primary">rplK</name>
    <name type="ordered locus">PEPE_1493</name>
</gene>
<evidence type="ECO:0000255" key="1">
    <source>
        <dbReference type="HAMAP-Rule" id="MF_00736"/>
    </source>
</evidence>
<evidence type="ECO:0000305" key="2"/>
<proteinExistence type="inferred from homology"/>
<accession>Q03E48</accession>